<name>DNTAD_BURSR</name>
<keyword id="KW-0058">Aromatic hydrocarbons catabolism</keyword>
<keyword id="KW-0223">Dioxygenase</keyword>
<keyword id="KW-0560">Oxidoreductase</keyword>
<accession>Q45696</accession>
<sequence>MMINTQEDKLVSAHDAEEFHRFFVGHDSDLQQEVTTLLTREADLLDIQAYKAWLEHCVAPEIKYQVISRELRSTSERRYQLNDAVNIYNENYQQLKVRVEHQMDPQNWYNSPKIRFTRFVTNVTAAKDKSAPEMLHVRSNLILHRARRGNQVDVFYATREDKWKRIEGGGIKLVERFVDYPERSPQTHNLMIFL</sequence>
<gene>
    <name evidence="2" type="primary">dntAd</name>
</gene>
<dbReference type="EMBL" id="U62430">
    <property type="protein sequence ID" value="AAB09767.1"/>
    <property type="molecule type" value="Genomic_DNA"/>
</dbReference>
<dbReference type="SMR" id="Q45696"/>
<dbReference type="KEGG" id="ag:AAB09767"/>
<dbReference type="GO" id="GO:0051213">
    <property type="term" value="F:dioxygenase activity"/>
    <property type="evidence" value="ECO:0007669"/>
    <property type="project" value="UniProtKB-KW"/>
</dbReference>
<dbReference type="GO" id="GO:0019380">
    <property type="term" value="P:3-phenylpropionate catabolic process"/>
    <property type="evidence" value="ECO:0007669"/>
    <property type="project" value="TreeGrafter"/>
</dbReference>
<dbReference type="CDD" id="cd00667">
    <property type="entry name" value="ring_hydroxylating_dioxygenases_beta"/>
    <property type="match status" value="1"/>
</dbReference>
<dbReference type="Gene3D" id="3.10.450.50">
    <property type="match status" value="1"/>
</dbReference>
<dbReference type="InterPro" id="IPR032710">
    <property type="entry name" value="NTF2-like_dom_sf"/>
</dbReference>
<dbReference type="InterPro" id="IPR000391">
    <property type="entry name" value="Rng_hydr_dOase-bsu"/>
</dbReference>
<dbReference type="PANTHER" id="PTHR41534:SF2">
    <property type="entry name" value="3-PHENYLPROPIONATE_CINNAMIC ACID DIOXYGENASE SUBUNIT BETA"/>
    <property type="match status" value="1"/>
</dbReference>
<dbReference type="PANTHER" id="PTHR41534">
    <property type="entry name" value="BLR3401 PROTEIN"/>
    <property type="match status" value="1"/>
</dbReference>
<dbReference type="Pfam" id="PF00866">
    <property type="entry name" value="Ring_hydroxyl_B"/>
    <property type="match status" value="1"/>
</dbReference>
<dbReference type="SUPFAM" id="SSF54427">
    <property type="entry name" value="NTF2-like"/>
    <property type="match status" value="1"/>
</dbReference>
<protein>
    <recommendedName>
        <fullName evidence="3">2,4-dinitrotoluene dioxygenase system, small oxygenase component</fullName>
    </recommendedName>
    <alternativeName>
        <fullName evidence="3">2,4-dinitrotoluene dioxygenase ISP beta</fullName>
    </alternativeName>
    <alternativeName>
        <fullName evidence="2">2,4-dinitrotoluene dioxygenase subunit beta</fullName>
    </alternativeName>
</protein>
<evidence type="ECO:0000269" key="1">
    <source>
    </source>
</evidence>
<evidence type="ECO:0000303" key="2">
    <source>
    </source>
</evidence>
<evidence type="ECO:0000305" key="3"/>
<evidence type="ECO:0000305" key="4">
    <source>
    </source>
</evidence>
<evidence type="ECO:0000312" key="5">
    <source>
        <dbReference type="EMBL" id="AAB09767.1"/>
    </source>
</evidence>
<organism>
    <name type="scientific">Burkholderia sp. (strain RASC)</name>
    <dbReference type="NCBI Taxonomy" id="69003"/>
    <lineage>
        <taxon>Bacteria</taxon>
        <taxon>Pseudomonadati</taxon>
        <taxon>Pseudomonadota</taxon>
        <taxon>Betaproteobacteria</taxon>
        <taxon>Burkholderiales</taxon>
        <taxon>Burkholderiaceae</taxon>
        <taxon>Burkholderia</taxon>
    </lineage>
</organism>
<feature type="chain" id="PRO_0000442190" description="2,4-dinitrotoluene dioxygenase system, small oxygenase component">
    <location>
        <begin position="1"/>
        <end position="194"/>
    </location>
</feature>
<proteinExistence type="evidence at protein level"/>
<reference key="1">
    <citation type="journal article" date="1996" name="J. Bacteriol.">
        <title>2,4-Dinitrotoluene dioxygenase from Burkholderia sp. strain DNT: similarity to naphthalene dioxygenase.</title>
        <authorList>
            <person name="Suen W.C."/>
            <person name="Haigler B.E."/>
            <person name="Spain J.C."/>
        </authorList>
    </citation>
    <scope>NUCLEOTIDE SEQUENCE [GENOMIC DNA]</scope>
    <scope>FUNCTION</scope>
    <scope>SUBSTRATE SPECIFICITY</scope>
    <scope>SUBUNIT</scope>
    <source>
        <strain evidence="5">DNT</strain>
    </source>
</reference>
<comment type="function">
    <text evidence="1">Component of the 2,4-dinitrotoluene dioxygenase (DNTDO) multicomponent enzyme system which catalyzes the incorporation of both atoms of molecular oxygen into 2,4-dinitrotoluene (DNT) to form 4-methyl-5-nitrocatechol (MNC) and nitrite. The beta subunit seems to have a structural role in the holoenzyme. Also able to convert naphthalene to cis-(1R,2S)-dihydroxy-1,2-dihydronaphthalene.</text>
</comment>
<comment type="subunit">
    <text evidence="4">The 2,4-dinitrotoluene dioxygenase (DNTDO) multicomponent enzyme system is composed of an electron transfer component and a dioxygenase component (iron sulfur protein (ISP)). The electron transfer component is composed of a ferredoxin reductase (DntAa) and a ferredoxin (DntAb), and the dioxygenase component is formed of a large alpha subunit (DntAc) and a small beta subunit (DntAd).</text>
</comment>
<comment type="similarity">
    <text evidence="3">Belongs to the bacterial ring-hydroxylating dioxygenase beta subunit family.</text>
</comment>